<proteinExistence type="inferred from homology"/>
<reference key="1">
    <citation type="journal article" date="2008" name="Genome Res.">
        <title>Chlamydia trachomatis: genome sequence analysis of lymphogranuloma venereum isolates.</title>
        <authorList>
            <person name="Thomson N.R."/>
            <person name="Holden M.T.G."/>
            <person name="Carder C."/>
            <person name="Lennard N."/>
            <person name="Lockey S.J."/>
            <person name="Marsh P."/>
            <person name="Skipp P."/>
            <person name="O'Connor C.D."/>
            <person name="Goodhead I."/>
            <person name="Norbertzcak H."/>
            <person name="Harris B."/>
            <person name="Ormond D."/>
            <person name="Rance R."/>
            <person name="Quail M.A."/>
            <person name="Parkhill J."/>
            <person name="Stephens R.S."/>
            <person name="Clarke I.N."/>
        </authorList>
    </citation>
    <scope>NUCLEOTIDE SEQUENCE [LARGE SCALE GENOMIC DNA]</scope>
    <source>
        <strain>UCH-1/proctitis</strain>
    </source>
</reference>
<feature type="chain" id="PRO_1000091616" description="Ribonuclease HII">
    <location>
        <begin position="1"/>
        <end position="217"/>
    </location>
</feature>
<feature type="domain" description="RNase H type-2" evidence="2">
    <location>
        <begin position="27"/>
        <end position="216"/>
    </location>
</feature>
<feature type="binding site" evidence="1">
    <location>
        <position position="33"/>
    </location>
    <ligand>
        <name>a divalent metal cation</name>
        <dbReference type="ChEBI" id="CHEBI:60240"/>
    </ligand>
</feature>
<feature type="binding site" evidence="1">
    <location>
        <position position="34"/>
    </location>
    <ligand>
        <name>a divalent metal cation</name>
        <dbReference type="ChEBI" id="CHEBI:60240"/>
    </ligand>
</feature>
<feature type="binding site" evidence="1">
    <location>
        <position position="126"/>
    </location>
    <ligand>
        <name>a divalent metal cation</name>
        <dbReference type="ChEBI" id="CHEBI:60240"/>
    </ligand>
</feature>
<comment type="function">
    <text evidence="1">Endonuclease that specifically degrades the RNA of RNA-DNA hybrids.</text>
</comment>
<comment type="catalytic activity">
    <reaction evidence="1">
        <text>Endonucleolytic cleavage to 5'-phosphomonoester.</text>
        <dbReference type="EC" id="3.1.26.4"/>
    </reaction>
</comment>
<comment type="cofactor">
    <cofactor evidence="1">
        <name>Mn(2+)</name>
        <dbReference type="ChEBI" id="CHEBI:29035"/>
    </cofactor>
    <cofactor evidence="1">
        <name>Mg(2+)</name>
        <dbReference type="ChEBI" id="CHEBI:18420"/>
    </cofactor>
    <text evidence="1">Manganese or magnesium. Binds 1 divalent metal ion per monomer in the absence of substrate. May bind a second metal ion after substrate binding.</text>
</comment>
<comment type="subcellular location">
    <subcellularLocation>
        <location evidence="1">Cytoplasm</location>
    </subcellularLocation>
</comment>
<comment type="similarity">
    <text evidence="1">Belongs to the RNase HII family.</text>
</comment>
<organism>
    <name type="scientific">Chlamydia trachomatis serovar L2b (strain UCH-1/proctitis)</name>
    <dbReference type="NCBI Taxonomy" id="471473"/>
    <lineage>
        <taxon>Bacteria</taxon>
        <taxon>Pseudomonadati</taxon>
        <taxon>Chlamydiota</taxon>
        <taxon>Chlamydiia</taxon>
        <taxon>Chlamydiales</taxon>
        <taxon>Chlamydiaceae</taxon>
        <taxon>Chlamydia/Chlamydophila group</taxon>
        <taxon>Chlamydia</taxon>
    </lineage>
</organism>
<dbReference type="EC" id="3.1.26.4" evidence="1"/>
<dbReference type="EMBL" id="AM884177">
    <property type="protein sequence ID" value="CAP06677.1"/>
    <property type="molecule type" value="Genomic_DNA"/>
</dbReference>
<dbReference type="RefSeq" id="WP_009873505.1">
    <property type="nucleotide sequence ID" value="NC_010280.2"/>
</dbReference>
<dbReference type="SMR" id="B0BB15"/>
<dbReference type="KEGG" id="ctl:CTLon_0279"/>
<dbReference type="HOGENOM" id="CLU_036532_2_1_0"/>
<dbReference type="Proteomes" id="UP001154401">
    <property type="component" value="Chromosome"/>
</dbReference>
<dbReference type="GO" id="GO:0005737">
    <property type="term" value="C:cytoplasm"/>
    <property type="evidence" value="ECO:0007669"/>
    <property type="project" value="UniProtKB-SubCell"/>
</dbReference>
<dbReference type="GO" id="GO:0032299">
    <property type="term" value="C:ribonuclease H2 complex"/>
    <property type="evidence" value="ECO:0007669"/>
    <property type="project" value="TreeGrafter"/>
</dbReference>
<dbReference type="GO" id="GO:0030145">
    <property type="term" value="F:manganese ion binding"/>
    <property type="evidence" value="ECO:0007669"/>
    <property type="project" value="UniProtKB-UniRule"/>
</dbReference>
<dbReference type="GO" id="GO:0003723">
    <property type="term" value="F:RNA binding"/>
    <property type="evidence" value="ECO:0007669"/>
    <property type="project" value="InterPro"/>
</dbReference>
<dbReference type="GO" id="GO:0004523">
    <property type="term" value="F:RNA-DNA hybrid ribonuclease activity"/>
    <property type="evidence" value="ECO:0007669"/>
    <property type="project" value="UniProtKB-UniRule"/>
</dbReference>
<dbReference type="GO" id="GO:0043137">
    <property type="term" value="P:DNA replication, removal of RNA primer"/>
    <property type="evidence" value="ECO:0007669"/>
    <property type="project" value="TreeGrafter"/>
</dbReference>
<dbReference type="GO" id="GO:0006298">
    <property type="term" value="P:mismatch repair"/>
    <property type="evidence" value="ECO:0007669"/>
    <property type="project" value="TreeGrafter"/>
</dbReference>
<dbReference type="CDD" id="cd07182">
    <property type="entry name" value="RNase_HII_bacteria_HII_like"/>
    <property type="match status" value="1"/>
</dbReference>
<dbReference type="FunFam" id="3.30.420.10:FF:000006">
    <property type="entry name" value="Ribonuclease HII"/>
    <property type="match status" value="1"/>
</dbReference>
<dbReference type="Gene3D" id="3.30.420.10">
    <property type="entry name" value="Ribonuclease H-like superfamily/Ribonuclease H"/>
    <property type="match status" value="1"/>
</dbReference>
<dbReference type="HAMAP" id="MF_00052_B">
    <property type="entry name" value="RNase_HII_B"/>
    <property type="match status" value="1"/>
</dbReference>
<dbReference type="InterPro" id="IPR022898">
    <property type="entry name" value="RNase_HII"/>
</dbReference>
<dbReference type="InterPro" id="IPR001352">
    <property type="entry name" value="RNase_HII/HIII"/>
</dbReference>
<dbReference type="InterPro" id="IPR024567">
    <property type="entry name" value="RNase_HII/HIII_dom"/>
</dbReference>
<dbReference type="InterPro" id="IPR012337">
    <property type="entry name" value="RNaseH-like_sf"/>
</dbReference>
<dbReference type="InterPro" id="IPR036397">
    <property type="entry name" value="RNaseH_sf"/>
</dbReference>
<dbReference type="NCBIfam" id="NF000594">
    <property type="entry name" value="PRK00015.1-1"/>
    <property type="match status" value="1"/>
</dbReference>
<dbReference type="NCBIfam" id="NF000595">
    <property type="entry name" value="PRK00015.1-3"/>
    <property type="match status" value="1"/>
</dbReference>
<dbReference type="PANTHER" id="PTHR10954">
    <property type="entry name" value="RIBONUCLEASE H2 SUBUNIT A"/>
    <property type="match status" value="1"/>
</dbReference>
<dbReference type="PANTHER" id="PTHR10954:SF18">
    <property type="entry name" value="RIBONUCLEASE HII"/>
    <property type="match status" value="1"/>
</dbReference>
<dbReference type="Pfam" id="PF01351">
    <property type="entry name" value="RNase_HII"/>
    <property type="match status" value="1"/>
</dbReference>
<dbReference type="SUPFAM" id="SSF53098">
    <property type="entry name" value="Ribonuclease H-like"/>
    <property type="match status" value="1"/>
</dbReference>
<dbReference type="PROSITE" id="PS51975">
    <property type="entry name" value="RNASE_H_2"/>
    <property type="match status" value="1"/>
</dbReference>
<keyword id="KW-0963">Cytoplasm</keyword>
<keyword id="KW-0255">Endonuclease</keyword>
<keyword id="KW-0378">Hydrolase</keyword>
<keyword id="KW-0464">Manganese</keyword>
<keyword id="KW-0479">Metal-binding</keyword>
<keyword id="KW-0540">Nuclease</keyword>
<evidence type="ECO:0000255" key="1">
    <source>
        <dbReference type="HAMAP-Rule" id="MF_00052"/>
    </source>
</evidence>
<evidence type="ECO:0000255" key="2">
    <source>
        <dbReference type="PROSITE-ProRule" id="PRU01319"/>
    </source>
</evidence>
<sequence length="217" mass="23975">MKSTVEQAMLFEEKSIFENQAIEQGYSQVAGVDEAGRGPLAGPVVAGACILPRGKVFLGIDDSKKLTPKQRRYLYELLLEDPEVDCGVGVISVERIDEINILEATKEAMVQAIASLRSTPDFLLVDGLFLPHKIPSLKIIKGDARSVSIAAASIIAKEYRDELMRKLHVEYPEYGFDKHKGYGTAAHLQALKHFGPCVYHRKSFSPVKESIQEGVCQ</sequence>
<name>RNH2_CHLTB</name>
<protein>
    <recommendedName>
        <fullName evidence="1">Ribonuclease HII</fullName>
        <shortName evidence="1">RNase HII</shortName>
        <ecNumber evidence="1">3.1.26.4</ecNumber>
    </recommendedName>
</protein>
<gene>
    <name evidence="1" type="primary">rnhB</name>
    <name type="ordered locus">CTLon_0279</name>
</gene>
<accession>B0BB15</accession>